<evidence type="ECO:0000255" key="1">
    <source>
        <dbReference type="HAMAP-Rule" id="MF_00427"/>
    </source>
</evidence>
<organism>
    <name type="scientific">Pasteurella multocida (strain Pm70)</name>
    <dbReference type="NCBI Taxonomy" id="272843"/>
    <lineage>
        <taxon>Bacteria</taxon>
        <taxon>Pseudomonadati</taxon>
        <taxon>Pseudomonadota</taxon>
        <taxon>Gammaproteobacteria</taxon>
        <taxon>Pasteurellales</taxon>
        <taxon>Pasteurellaceae</taxon>
        <taxon>Pasteurella</taxon>
    </lineage>
</organism>
<dbReference type="EC" id="7.2.1.1" evidence="1"/>
<dbReference type="EMBL" id="AE004439">
    <property type="protein sequence ID" value="AAK03414.1"/>
    <property type="molecule type" value="Genomic_DNA"/>
</dbReference>
<dbReference type="RefSeq" id="WP_005723929.1">
    <property type="nucleotide sequence ID" value="NC_002663.1"/>
</dbReference>
<dbReference type="SMR" id="Q9CLA9"/>
<dbReference type="STRING" id="272843.PM1330"/>
<dbReference type="EnsemblBacteria" id="AAK03414">
    <property type="protein sequence ID" value="AAK03414"/>
    <property type="gene ID" value="PM1330"/>
</dbReference>
<dbReference type="KEGG" id="pmu:PM1330"/>
<dbReference type="HOGENOM" id="CLU_077882_0_1_6"/>
<dbReference type="OrthoDB" id="9786835at2"/>
<dbReference type="Proteomes" id="UP000000809">
    <property type="component" value="Chromosome"/>
</dbReference>
<dbReference type="GO" id="GO:0005886">
    <property type="term" value="C:plasma membrane"/>
    <property type="evidence" value="ECO:0007669"/>
    <property type="project" value="UniProtKB-SubCell"/>
</dbReference>
<dbReference type="GO" id="GO:0010181">
    <property type="term" value="F:FMN binding"/>
    <property type="evidence" value="ECO:0007669"/>
    <property type="project" value="UniProtKB-UniRule"/>
</dbReference>
<dbReference type="GO" id="GO:0016655">
    <property type="term" value="F:oxidoreductase activity, acting on NAD(P)H, quinone or similar compound as acceptor"/>
    <property type="evidence" value="ECO:0007669"/>
    <property type="project" value="UniProtKB-UniRule"/>
</dbReference>
<dbReference type="GO" id="GO:0006814">
    <property type="term" value="P:sodium ion transport"/>
    <property type="evidence" value="ECO:0007669"/>
    <property type="project" value="UniProtKB-UniRule"/>
</dbReference>
<dbReference type="HAMAP" id="MF_00427">
    <property type="entry name" value="NqrC"/>
    <property type="match status" value="1"/>
</dbReference>
<dbReference type="InterPro" id="IPR007329">
    <property type="entry name" value="FMN-bd"/>
</dbReference>
<dbReference type="InterPro" id="IPR010204">
    <property type="entry name" value="NqrC"/>
</dbReference>
<dbReference type="NCBIfam" id="TIGR01938">
    <property type="entry name" value="nqrC"/>
    <property type="match status" value="1"/>
</dbReference>
<dbReference type="NCBIfam" id="NF003746">
    <property type="entry name" value="PRK05346.1-1"/>
    <property type="match status" value="1"/>
</dbReference>
<dbReference type="NCBIfam" id="NF003749">
    <property type="entry name" value="PRK05346.1-5"/>
    <property type="match status" value="1"/>
</dbReference>
<dbReference type="PANTHER" id="PTHR37838">
    <property type="entry name" value="NA(+)-TRANSLOCATING NADH-QUINONE REDUCTASE SUBUNIT C"/>
    <property type="match status" value="1"/>
</dbReference>
<dbReference type="PANTHER" id="PTHR37838:SF1">
    <property type="entry name" value="NA(+)-TRANSLOCATING NADH-QUINONE REDUCTASE SUBUNIT C"/>
    <property type="match status" value="1"/>
</dbReference>
<dbReference type="Pfam" id="PF04205">
    <property type="entry name" value="FMN_bind"/>
    <property type="match status" value="1"/>
</dbReference>
<dbReference type="PIRSF" id="PIRSF009437">
    <property type="entry name" value="NQR-1_subunit_C"/>
    <property type="match status" value="1"/>
</dbReference>
<dbReference type="SMART" id="SM00900">
    <property type="entry name" value="FMN_bind"/>
    <property type="match status" value="1"/>
</dbReference>
<comment type="function">
    <text evidence="1">NQR complex catalyzes the reduction of ubiquinone-1 to ubiquinol by two successive reactions, coupled with the transport of Na(+) ions from the cytoplasm to the periplasm. NqrA to NqrE are probably involved in the second step, the conversion of ubisemiquinone to ubiquinol.</text>
</comment>
<comment type="catalytic activity">
    <reaction evidence="1">
        <text>a ubiquinone + n Na(+)(in) + NADH + H(+) = a ubiquinol + n Na(+)(out) + NAD(+)</text>
        <dbReference type="Rhea" id="RHEA:47748"/>
        <dbReference type="Rhea" id="RHEA-COMP:9565"/>
        <dbReference type="Rhea" id="RHEA-COMP:9566"/>
        <dbReference type="ChEBI" id="CHEBI:15378"/>
        <dbReference type="ChEBI" id="CHEBI:16389"/>
        <dbReference type="ChEBI" id="CHEBI:17976"/>
        <dbReference type="ChEBI" id="CHEBI:29101"/>
        <dbReference type="ChEBI" id="CHEBI:57540"/>
        <dbReference type="ChEBI" id="CHEBI:57945"/>
        <dbReference type="EC" id="7.2.1.1"/>
    </reaction>
</comment>
<comment type="cofactor">
    <cofactor evidence="1">
        <name>FMN</name>
        <dbReference type="ChEBI" id="CHEBI:58210"/>
    </cofactor>
</comment>
<comment type="subunit">
    <text evidence="1">Composed of six subunits; NqrA, NqrB, NqrC, NqrD, NqrE and NqrF.</text>
</comment>
<comment type="subcellular location">
    <subcellularLocation>
        <location evidence="1">Cell inner membrane</location>
        <topology evidence="1">Single-pass membrane protein</topology>
    </subcellularLocation>
</comment>
<comment type="similarity">
    <text evidence="1">Belongs to the NqrC family.</text>
</comment>
<feature type="chain" id="PRO_0000214219" description="Na(+)-translocating NADH-quinone reductase subunit C">
    <location>
        <begin position="1"/>
        <end position="260"/>
    </location>
</feature>
<feature type="transmembrane region" description="Helical" evidence="1">
    <location>
        <begin position="12"/>
        <end position="32"/>
    </location>
</feature>
<feature type="modified residue" description="FMN phosphoryl threonine" evidence="1">
    <location>
        <position position="226"/>
    </location>
</feature>
<gene>
    <name evidence="1" type="primary">nqrC</name>
    <name type="ordered locus">PM1330</name>
</gene>
<accession>Q9CLA9</accession>
<sequence length="260" mass="27621">MFKNKDSVGGTLLVIILLSLACSIIVAGSAVLLKPTQIEQKELDKQKNILSVAGLLQPTTKNSEIKTIYANNIEARLVDLNTGDFAPAQPGFDAAKAVKNPAESTALSAEDDVAGIRVRANFAEVYLVKNDAGQVTQVVLPFYGKGLWSMMYGFMSVQPDGNTVNGITYYDQGETPGLGGEIENPKWQAQFPGKKLYTADNQVGLYVGKGASANAEHGIDAISGSTLTSNGVNNSFKFWLGQKGFGPFLAKLKAGVLNNG</sequence>
<proteinExistence type="inferred from homology"/>
<keyword id="KW-0997">Cell inner membrane</keyword>
<keyword id="KW-1003">Cell membrane</keyword>
<keyword id="KW-0285">Flavoprotein</keyword>
<keyword id="KW-0288">FMN</keyword>
<keyword id="KW-0406">Ion transport</keyword>
<keyword id="KW-0472">Membrane</keyword>
<keyword id="KW-0520">NAD</keyword>
<keyword id="KW-0597">Phosphoprotein</keyword>
<keyword id="KW-1185">Reference proteome</keyword>
<keyword id="KW-0915">Sodium</keyword>
<keyword id="KW-0739">Sodium transport</keyword>
<keyword id="KW-1278">Translocase</keyword>
<keyword id="KW-0812">Transmembrane</keyword>
<keyword id="KW-1133">Transmembrane helix</keyword>
<keyword id="KW-0813">Transport</keyword>
<keyword id="KW-0830">Ubiquinone</keyword>
<name>NQRC_PASMU</name>
<protein>
    <recommendedName>
        <fullName evidence="1">Na(+)-translocating NADH-quinone reductase subunit C</fullName>
        <shortName evidence="1">Na(+)-NQR subunit C</shortName>
        <shortName evidence="1">Na(+)-translocating NQR subunit C</shortName>
        <ecNumber evidence="1">7.2.1.1</ecNumber>
    </recommendedName>
    <alternativeName>
        <fullName evidence="1">NQR complex subunit C</fullName>
    </alternativeName>
    <alternativeName>
        <fullName evidence="1">NQR-1 subunit C</fullName>
    </alternativeName>
</protein>
<reference key="1">
    <citation type="journal article" date="2001" name="Proc. Natl. Acad. Sci. U.S.A.">
        <title>Complete genomic sequence of Pasteurella multocida Pm70.</title>
        <authorList>
            <person name="May B.J."/>
            <person name="Zhang Q."/>
            <person name="Li L.L."/>
            <person name="Paustian M.L."/>
            <person name="Whittam T.S."/>
            <person name="Kapur V."/>
        </authorList>
    </citation>
    <scope>NUCLEOTIDE SEQUENCE [LARGE SCALE GENOMIC DNA]</scope>
    <source>
        <strain>Pm70</strain>
    </source>
</reference>